<evidence type="ECO:0000255" key="1">
    <source>
        <dbReference type="HAMAP-Rule" id="MF_01383"/>
    </source>
</evidence>
<evidence type="ECO:0000269" key="2">
    <source>
    </source>
</evidence>
<dbReference type="EC" id="1.10.3.9" evidence="1"/>
<dbReference type="EMBL" id="X86563">
    <property type="protein sequence ID" value="CAA60270.1"/>
    <property type="molecule type" value="Genomic_DNA"/>
</dbReference>
<dbReference type="PIR" id="S58536">
    <property type="entry name" value="S58536"/>
</dbReference>
<dbReference type="RefSeq" id="NP_043009.1">
    <property type="nucleotide sequence ID" value="NC_001666.2"/>
</dbReference>
<dbReference type="SMR" id="P48184"/>
<dbReference type="STRING" id="4577.P48184"/>
<dbReference type="iPTMnet" id="P48184"/>
<dbReference type="GeneID" id="845202"/>
<dbReference type="KEGG" id="zma:845202"/>
<dbReference type="MaizeGDB" id="105984"/>
<dbReference type="InParanoid" id="P48184"/>
<dbReference type="OrthoDB" id="34776at2759"/>
<dbReference type="Proteomes" id="UP000007305">
    <property type="component" value="Chloroplast"/>
</dbReference>
<dbReference type="ExpressionAtlas" id="P48184">
    <property type="expression patterns" value="baseline and differential"/>
</dbReference>
<dbReference type="GO" id="GO:0009535">
    <property type="term" value="C:chloroplast thylakoid membrane"/>
    <property type="evidence" value="ECO:0007669"/>
    <property type="project" value="UniProtKB-SubCell"/>
</dbReference>
<dbReference type="GO" id="GO:0009523">
    <property type="term" value="C:photosystem II"/>
    <property type="evidence" value="ECO:0000318"/>
    <property type="project" value="GO_Central"/>
</dbReference>
<dbReference type="GO" id="GO:0016168">
    <property type="term" value="F:chlorophyll binding"/>
    <property type="evidence" value="ECO:0007669"/>
    <property type="project" value="UniProtKB-UniRule"/>
</dbReference>
<dbReference type="GO" id="GO:0045156">
    <property type="term" value="F:electron transporter, transferring electrons within the cyclic electron transport pathway of photosynthesis activity"/>
    <property type="evidence" value="ECO:0007669"/>
    <property type="project" value="InterPro"/>
</dbReference>
<dbReference type="GO" id="GO:0005506">
    <property type="term" value="F:iron ion binding"/>
    <property type="evidence" value="ECO:0007669"/>
    <property type="project" value="UniProtKB-UniRule"/>
</dbReference>
<dbReference type="GO" id="GO:0010242">
    <property type="term" value="F:oxygen evolving activity"/>
    <property type="evidence" value="ECO:0007669"/>
    <property type="project" value="UniProtKB-EC"/>
</dbReference>
<dbReference type="GO" id="GO:0009772">
    <property type="term" value="P:photosynthetic electron transport in photosystem II"/>
    <property type="evidence" value="ECO:0007669"/>
    <property type="project" value="InterPro"/>
</dbReference>
<dbReference type="CDD" id="cd09288">
    <property type="entry name" value="Photosystem-II_D2"/>
    <property type="match status" value="1"/>
</dbReference>
<dbReference type="FunFam" id="1.20.85.10:FF:000001">
    <property type="entry name" value="photosystem II D2 protein-like"/>
    <property type="match status" value="1"/>
</dbReference>
<dbReference type="Gene3D" id="1.20.85.10">
    <property type="entry name" value="Photosystem II protein D1-like"/>
    <property type="match status" value="1"/>
</dbReference>
<dbReference type="HAMAP" id="MF_01383">
    <property type="entry name" value="PSII_PsbD_D2"/>
    <property type="match status" value="1"/>
</dbReference>
<dbReference type="InterPro" id="IPR055266">
    <property type="entry name" value="D1/D2"/>
</dbReference>
<dbReference type="InterPro" id="IPR036854">
    <property type="entry name" value="Photo_II_D1/D2_sf"/>
</dbReference>
<dbReference type="InterPro" id="IPR000484">
    <property type="entry name" value="Photo_RC_L/M"/>
</dbReference>
<dbReference type="InterPro" id="IPR055265">
    <property type="entry name" value="Photo_RC_L/M_CS"/>
</dbReference>
<dbReference type="InterPro" id="IPR005868">
    <property type="entry name" value="PSII_PsbD/D2"/>
</dbReference>
<dbReference type="NCBIfam" id="TIGR01152">
    <property type="entry name" value="psbD"/>
    <property type="match status" value="1"/>
</dbReference>
<dbReference type="PANTHER" id="PTHR33149:SF12">
    <property type="entry name" value="PHOTOSYSTEM II D2 PROTEIN"/>
    <property type="match status" value="1"/>
</dbReference>
<dbReference type="PANTHER" id="PTHR33149">
    <property type="entry name" value="PHOTOSYSTEM II PROTEIN D1"/>
    <property type="match status" value="1"/>
</dbReference>
<dbReference type="Pfam" id="PF00124">
    <property type="entry name" value="Photo_RC"/>
    <property type="match status" value="1"/>
</dbReference>
<dbReference type="PRINTS" id="PR00256">
    <property type="entry name" value="REACTNCENTRE"/>
</dbReference>
<dbReference type="SUPFAM" id="SSF81483">
    <property type="entry name" value="Bacterial photosystem II reaction centre, L and M subunits"/>
    <property type="match status" value="1"/>
</dbReference>
<dbReference type="PROSITE" id="PS00244">
    <property type="entry name" value="REACTION_CENTER"/>
    <property type="match status" value="1"/>
</dbReference>
<accession>P48184</accession>
<geneLocation type="chloroplast"/>
<gene>
    <name evidence="1" type="primary">psbD</name>
</gene>
<organism>
    <name type="scientific">Zea mays</name>
    <name type="common">Maize</name>
    <dbReference type="NCBI Taxonomy" id="4577"/>
    <lineage>
        <taxon>Eukaryota</taxon>
        <taxon>Viridiplantae</taxon>
        <taxon>Streptophyta</taxon>
        <taxon>Embryophyta</taxon>
        <taxon>Tracheophyta</taxon>
        <taxon>Spermatophyta</taxon>
        <taxon>Magnoliopsida</taxon>
        <taxon>Liliopsida</taxon>
        <taxon>Poales</taxon>
        <taxon>Poaceae</taxon>
        <taxon>PACMAD clade</taxon>
        <taxon>Panicoideae</taxon>
        <taxon>Andropogonodae</taxon>
        <taxon>Andropogoneae</taxon>
        <taxon>Tripsacinae</taxon>
        <taxon>Zea</taxon>
    </lineage>
</organism>
<sequence>MTIAVGRVTKEENDLFPLIDDWLRRDRFVFVGWSGLLLFPCAYFALGGWFTGTTFVTSWYTHGLASSYLEGCNFLTAAVSTPANSLAHSLLLLWGPEAQGDFTRWSQLGGLWTFLALHGAFALIGFMLRQFELARPVQLRPYNAISFSGPIAVFLSVFLIYPLGQSGWFFSPSFGVAAIFRFILFFQGFHNWTLKPFHMMGVAGVLGAVLLCAIHGATVENTLFEDGDGANTFRAFNPTQAEETYSMVTANRFWSQIFGVAFSNKRWLHFFMLFVPVTGLWMSAIGVVGLALNLRAYDFVSQEIRAAEDPEFETFYTKNILLNEGIRAWMAAQDQPHENLIFPEEVLPRGNAL</sequence>
<protein>
    <recommendedName>
        <fullName evidence="1">Photosystem II D2 protein</fullName>
        <shortName evidence="1">PSII D2 protein</shortName>
        <ecNumber evidence="1">1.10.3.9</ecNumber>
    </recommendedName>
    <alternativeName>
        <fullName evidence="1">Photosystem Q(A) protein</fullName>
    </alternativeName>
</protein>
<comment type="function">
    <text evidence="1">Photosystem II (PSII) is a light-driven water:plastoquinone oxidoreductase that uses light energy to abstract electrons from H(2)O, generating O(2) and a proton gradient subsequently used for ATP formation. It consists of a core antenna complex that captures photons, and an electron transfer chain that converts photonic excitation into a charge separation. The D1/D2 (PsbA/PsbD) reaction center heterodimer binds P680, the primary electron donor of PSII as well as several subsequent electron acceptors. D2 is needed for assembly of a stable PSII complex.</text>
</comment>
<comment type="catalytic activity">
    <reaction evidence="1">
        <text>2 a plastoquinone + 4 hnu + 2 H2O = 2 a plastoquinol + O2</text>
        <dbReference type="Rhea" id="RHEA:36359"/>
        <dbReference type="Rhea" id="RHEA-COMP:9561"/>
        <dbReference type="Rhea" id="RHEA-COMP:9562"/>
        <dbReference type="ChEBI" id="CHEBI:15377"/>
        <dbReference type="ChEBI" id="CHEBI:15379"/>
        <dbReference type="ChEBI" id="CHEBI:17757"/>
        <dbReference type="ChEBI" id="CHEBI:30212"/>
        <dbReference type="ChEBI" id="CHEBI:62192"/>
        <dbReference type="EC" id="1.10.3.9"/>
    </reaction>
</comment>
<comment type="cofactor">
    <text evidence="1">The D1/D2 heterodimer binds P680, chlorophylls that are the primary electron donor of PSII, and subsequent electron acceptors. It shares a non-heme iron and each subunit binds pheophytin, quinone, additional chlorophylls, carotenoids and lipids. There is also a Cl(-1) ion associated with D1 and D2, which is required for oxygen evolution. The PSII complex binds additional chlorophylls, carotenoids and specific lipids.</text>
</comment>
<comment type="subunit">
    <text evidence="1">PSII is composed of 1 copy each of membrane proteins PsbA, PsbB, PsbC, PsbD, PsbE, PsbF, PsbH, PsbI, PsbJ, PsbK, PsbL, PsbM, PsbT, PsbX, PsbY, PsbZ, Psb30/Ycf12, at least 3 peripheral proteins of the oxygen-evolving complex and a large number of cofactors. It forms dimeric complexes.</text>
</comment>
<comment type="subcellular location">
    <subcellularLocation>
        <location evidence="1">Plastid</location>
        <location evidence="1">Chloroplast thylakoid membrane</location>
        <topology evidence="1">Multi-pass membrane protein</topology>
    </subcellularLocation>
</comment>
<comment type="PTM">
    <text evidence="2">Only phosphorylated in mesophyll cells, phosphorylation increases when cells are grown under high rather than low light regimes (70 vs 900 umol photons/m-2/s).</text>
</comment>
<comment type="miscellaneous">
    <text evidence="1">2 of the reaction center chlorophylls (ChlD1 and ChlD2) are entirely coordinated by water.</text>
</comment>
<comment type="similarity">
    <text evidence="1">Belongs to the reaction center PufL/M/PsbA/D family.</text>
</comment>
<proteinExistence type="evidence at protein level"/>
<name>PSBD_MAIZE</name>
<reference key="1">
    <citation type="journal article" date="1995" name="J. Mol. Biol.">
        <title>Complete sequence of the maize chloroplast genome: gene content, hotspots of divergence and fine tuning of genetic information by transcript editing.</title>
        <authorList>
            <person name="Maier R.M."/>
            <person name="Neckermann K."/>
            <person name="Igloi G.L."/>
            <person name="Koessel H."/>
        </authorList>
    </citation>
    <scope>NUCLEOTIDE SEQUENCE [LARGE SCALE GENOMIC DNA]</scope>
    <source>
        <strain>cv. B73</strain>
    </source>
</reference>
<reference key="2">
    <citation type="journal article" date="2012" name="Proteomics">
        <title>Differential phosphorylation of thylakoid proteins in mesophyll and bundle sheath chloroplasts from maize plants grown under low or high light.</title>
        <authorList>
            <person name="Fristedt R."/>
            <person name="Wasilewska W."/>
            <person name="Romanowska E."/>
            <person name="Vener A.V."/>
        </authorList>
    </citation>
    <scope>PROTEIN SEQUENCE OF 2-6</scope>
    <scope>SUBCELLULAR LOCATION</scope>
    <scope>PHOSPHORYLATION AT THR-2</scope>
    <scope>ACETYLATION AT THR-2</scope>
    <source>
        <strain>cv. Olenka</strain>
        <tissue>Bundle sheath cell</tissue>
        <tissue>Mesophyll cell</tissue>
    </source>
</reference>
<keyword id="KW-0007">Acetylation</keyword>
<keyword id="KW-0148">Chlorophyll</keyword>
<keyword id="KW-0150">Chloroplast</keyword>
<keyword id="KW-0157">Chromophore</keyword>
<keyword id="KW-0903">Direct protein sequencing</keyword>
<keyword id="KW-0249">Electron transport</keyword>
<keyword id="KW-0408">Iron</keyword>
<keyword id="KW-0460">Magnesium</keyword>
<keyword id="KW-0472">Membrane</keyword>
<keyword id="KW-0479">Metal-binding</keyword>
<keyword id="KW-0560">Oxidoreductase</keyword>
<keyword id="KW-0597">Phosphoprotein</keyword>
<keyword id="KW-0602">Photosynthesis</keyword>
<keyword id="KW-0604">Photosystem II</keyword>
<keyword id="KW-0934">Plastid</keyword>
<keyword id="KW-1185">Reference proteome</keyword>
<keyword id="KW-0793">Thylakoid</keyword>
<keyword id="KW-0812">Transmembrane</keyword>
<keyword id="KW-1133">Transmembrane helix</keyword>
<keyword id="KW-0813">Transport</keyword>
<feature type="initiator methionine" description="Removed" evidence="2">
    <location>
        <position position="1"/>
    </location>
</feature>
<feature type="chain" id="PRO_0000090508" description="Photosystem II D2 protein">
    <location>
        <begin position="2"/>
        <end position="353"/>
    </location>
</feature>
<feature type="transmembrane region" description="Helical" evidence="1">
    <location>
        <begin position="41"/>
        <end position="61"/>
    </location>
</feature>
<feature type="transmembrane region" description="Helical" evidence="1">
    <location>
        <begin position="125"/>
        <end position="141"/>
    </location>
</feature>
<feature type="transmembrane region" description="Helical" evidence="1">
    <location>
        <begin position="153"/>
        <end position="166"/>
    </location>
</feature>
<feature type="transmembrane region" description="Helical" evidence="1">
    <location>
        <begin position="208"/>
        <end position="228"/>
    </location>
</feature>
<feature type="transmembrane region" description="Helical" evidence="1">
    <location>
        <begin position="279"/>
        <end position="295"/>
    </location>
</feature>
<feature type="binding site" description="axial binding residue" evidence="1">
    <location>
        <position position="118"/>
    </location>
    <ligand>
        <name>chlorophyll a</name>
        <dbReference type="ChEBI" id="CHEBI:58416"/>
        <label>ChlzD2</label>
    </ligand>
    <ligandPart>
        <name>Mg</name>
        <dbReference type="ChEBI" id="CHEBI:25107"/>
    </ligandPart>
</feature>
<feature type="binding site" evidence="1">
    <location>
        <position position="130"/>
    </location>
    <ligand>
        <name>pheophytin a</name>
        <dbReference type="ChEBI" id="CHEBI:136840"/>
        <label>D2</label>
    </ligand>
</feature>
<feature type="binding site" evidence="1">
    <location>
        <position position="143"/>
    </location>
    <ligand>
        <name>pheophytin a</name>
        <dbReference type="ChEBI" id="CHEBI:136840"/>
        <label>D2</label>
    </ligand>
</feature>
<feature type="binding site" description="axial binding residue" evidence="1">
    <location>
        <position position="198"/>
    </location>
    <ligand>
        <name>chlorophyll a</name>
        <dbReference type="ChEBI" id="CHEBI:58416"/>
        <label>PD2</label>
    </ligand>
    <ligandPart>
        <name>Mg</name>
        <dbReference type="ChEBI" id="CHEBI:25107"/>
    </ligandPart>
</feature>
<feature type="binding site" evidence="1">
    <location>
        <position position="215"/>
    </location>
    <ligand>
        <name>a plastoquinone</name>
        <dbReference type="ChEBI" id="CHEBI:17757"/>
        <label>Q(A)</label>
    </ligand>
</feature>
<feature type="binding site" evidence="1">
    <location>
        <position position="215"/>
    </location>
    <ligand>
        <name>Fe cation</name>
        <dbReference type="ChEBI" id="CHEBI:24875"/>
        <note>ligand shared with heterodimeric partner</note>
    </ligand>
</feature>
<feature type="binding site" evidence="1">
    <location>
        <position position="262"/>
    </location>
    <ligand>
        <name>a plastoquinone</name>
        <dbReference type="ChEBI" id="CHEBI:17757"/>
        <label>Q(A)</label>
    </ligand>
</feature>
<feature type="binding site" evidence="1">
    <location>
        <position position="269"/>
    </location>
    <ligand>
        <name>Fe cation</name>
        <dbReference type="ChEBI" id="CHEBI:24875"/>
        <note>ligand shared with heterodimeric partner</note>
    </ligand>
</feature>
<feature type="modified residue" description="N-acetylthreonine" evidence="2">
    <location>
        <position position="2"/>
    </location>
</feature>
<feature type="modified residue" description="Phosphothreonine" evidence="2">
    <location>
        <position position="2"/>
    </location>
</feature>